<keyword id="KW-0028">Amino-acid biosynthesis</keyword>
<keyword id="KW-0368">Histidine biosynthesis</keyword>
<keyword id="KW-0378">Hydrolase</keyword>
<keyword id="KW-0486">Methionine biosynthesis</keyword>
<keyword id="KW-0511">Multifunctional enzyme</keyword>
<keyword id="KW-0521">NADP</keyword>
<keyword id="KW-0554">One-carbon metabolism</keyword>
<keyword id="KW-0560">Oxidoreductase</keyword>
<keyword id="KW-0658">Purine biosynthesis</keyword>
<keyword id="KW-1185">Reference proteome</keyword>
<accession>A4FI92</accession>
<proteinExistence type="inferred from homology"/>
<protein>
    <recommendedName>
        <fullName evidence="1">Bifunctional protein FolD 1</fullName>
    </recommendedName>
    <domain>
        <recommendedName>
            <fullName evidence="1">Methylenetetrahydrofolate dehydrogenase</fullName>
            <ecNumber evidence="1">1.5.1.5</ecNumber>
        </recommendedName>
    </domain>
    <domain>
        <recommendedName>
            <fullName evidence="1">Methenyltetrahydrofolate cyclohydrolase</fullName>
            <ecNumber evidence="1">3.5.4.9</ecNumber>
        </recommendedName>
    </domain>
</protein>
<evidence type="ECO:0000255" key="1">
    <source>
        <dbReference type="HAMAP-Rule" id="MF_01576"/>
    </source>
</evidence>
<feature type="chain" id="PRO_0000305874" description="Bifunctional protein FolD 1">
    <location>
        <begin position="1"/>
        <end position="293"/>
    </location>
</feature>
<feature type="binding site" evidence="1">
    <location>
        <begin position="174"/>
        <end position="176"/>
    </location>
    <ligand>
        <name>NADP(+)</name>
        <dbReference type="ChEBI" id="CHEBI:58349"/>
    </ligand>
</feature>
<feature type="binding site" evidence="1">
    <location>
        <position position="240"/>
    </location>
    <ligand>
        <name>NADP(+)</name>
        <dbReference type="ChEBI" id="CHEBI:58349"/>
    </ligand>
</feature>
<gene>
    <name evidence="1" type="primary">folD1</name>
    <name type="ordered locus">SACE_4498</name>
</gene>
<reference key="1">
    <citation type="journal article" date="2007" name="Nat. Biotechnol.">
        <title>Complete genome sequence of the erythromycin-producing bacterium Saccharopolyspora erythraea NRRL23338.</title>
        <authorList>
            <person name="Oliynyk M."/>
            <person name="Samborskyy M."/>
            <person name="Lester J.B."/>
            <person name="Mironenko T."/>
            <person name="Scott N."/>
            <person name="Dickens S."/>
            <person name="Haydock S.F."/>
            <person name="Leadlay P.F."/>
        </authorList>
    </citation>
    <scope>NUCLEOTIDE SEQUENCE [LARGE SCALE GENOMIC DNA]</scope>
    <source>
        <strain>ATCC 11635 / DSM 40517 / JCM 4748 / NBRC 13426 / NCIMB 8594 / NRRL 2338</strain>
    </source>
</reference>
<organism>
    <name type="scientific">Saccharopolyspora erythraea (strain ATCC 11635 / DSM 40517 / JCM 4748 / NBRC 13426 / NCIMB 8594 / NRRL 2338)</name>
    <dbReference type="NCBI Taxonomy" id="405948"/>
    <lineage>
        <taxon>Bacteria</taxon>
        <taxon>Bacillati</taxon>
        <taxon>Actinomycetota</taxon>
        <taxon>Actinomycetes</taxon>
        <taxon>Pseudonocardiales</taxon>
        <taxon>Pseudonocardiaceae</taxon>
        <taxon>Saccharopolyspora</taxon>
    </lineage>
</organism>
<name>FOLD1_SACEN</name>
<dbReference type="EC" id="1.5.1.5" evidence="1"/>
<dbReference type="EC" id="3.5.4.9" evidence="1"/>
<dbReference type="EMBL" id="AM420293">
    <property type="protein sequence ID" value="CAM03767.1"/>
    <property type="molecule type" value="Genomic_DNA"/>
</dbReference>
<dbReference type="RefSeq" id="WP_009950747.1">
    <property type="nucleotide sequence ID" value="NC_009142.1"/>
</dbReference>
<dbReference type="SMR" id="A4FI92"/>
<dbReference type="STRING" id="405948.SACE_4498"/>
<dbReference type="KEGG" id="sen:SACE_4498"/>
<dbReference type="eggNOG" id="COG0190">
    <property type="taxonomic scope" value="Bacteria"/>
</dbReference>
<dbReference type="HOGENOM" id="CLU_034045_2_1_11"/>
<dbReference type="OrthoDB" id="9803580at2"/>
<dbReference type="UniPathway" id="UPA00193"/>
<dbReference type="Proteomes" id="UP000006728">
    <property type="component" value="Chromosome"/>
</dbReference>
<dbReference type="GO" id="GO:0005829">
    <property type="term" value="C:cytosol"/>
    <property type="evidence" value="ECO:0007669"/>
    <property type="project" value="TreeGrafter"/>
</dbReference>
<dbReference type="GO" id="GO:0004477">
    <property type="term" value="F:methenyltetrahydrofolate cyclohydrolase activity"/>
    <property type="evidence" value="ECO:0007669"/>
    <property type="project" value="UniProtKB-UniRule"/>
</dbReference>
<dbReference type="GO" id="GO:0004488">
    <property type="term" value="F:methylenetetrahydrofolate dehydrogenase (NADP+) activity"/>
    <property type="evidence" value="ECO:0007669"/>
    <property type="project" value="UniProtKB-UniRule"/>
</dbReference>
<dbReference type="GO" id="GO:0000105">
    <property type="term" value="P:L-histidine biosynthetic process"/>
    <property type="evidence" value="ECO:0007669"/>
    <property type="project" value="UniProtKB-KW"/>
</dbReference>
<dbReference type="GO" id="GO:0009086">
    <property type="term" value="P:methionine biosynthetic process"/>
    <property type="evidence" value="ECO:0007669"/>
    <property type="project" value="UniProtKB-KW"/>
</dbReference>
<dbReference type="GO" id="GO:0006164">
    <property type="term" value="P:purine nucleotide biosynthetic process"/>
    <property type="evidence" value="ECO:0007669"/>
    <property type="project" value="UniProtKB-KW"/>
</dbReference>
<dbReference type="GO" id="GO:0035999">
    <property type="term" value="P:tetrahydrofolate interconversion"/>
    <property type="evidence" value="ECO:0007669"/>
    <property type="project" value="UniProtKB-UniRule"/>
</dbReference>
<dbReference type="CDD" id="cd01080">
    <property type="entry name" value="NAD_bind_m-THF_DH_Cyclohyd"/>
    <property type="match status" value="1"/>
</dbReference>
<dbReference type="Gene3D" id="3.40.50.10860">
    <property type="entry name" value="Leucine Dehydrogenase, chain A, domain 1"/>
    <property type="match status" value="1"/>
</dbReference>
<dbReference type="Gene3D" id="3.40.50.720">
    <property type="entry name" value="NAD(P)-binding Rossmann-like Domain"/>
    <property type="match status" value="1"/>
</dbReference>
<dbReference type="HAMAP" id="MF_01576">
    <property type="entry name" value="THF_DHG_CYH"/>
    <property type="match status" value="1"/>
</dbReference>
<dbReference type="InterPro" id="IPR046346">
    <property type="entry name" value="Aminoacid_DH-like_N_sf"/>
</dbReference>
<dbReference type="InterPro" id="IPR036291">
    <property type="entry name" value="NAD(P)-bd_dom_sf"/>
</dbReference>
<dbReference type="InterPro" id="IPR000672">
    <property type="entry name" value="THF_DH/CycHdrlase"/>
</dbReference>
<dbReference type="InterPro" id="IPR020630">
    <property type="entry name" value="THF_DH/CycHdrlase_cat_dom"/>
</dbReference>
<dbReference type="InterPro" id="IPR020631">
    <property type="entry name" value="THF_DH/CycHdrlase_NAD-bd_dom"/>
</dbReference>
<dbReference type="PANTHER" id="PTHR48099:SF5">
    <property type="entry name" value="C-1-TETRAHYDROFOLATE SYNTHASE, CYTOPLASMIC"/>
    <property type="match status" value="1"/>
</dbReference>
<dbReference type="PANTHER" id="PTHR48099">
    <property type="entry name" value="C-1-TETRAHYDROFOLATE SYNTHASE, CYTOPLASMIC-RELATED"/>
    <property type="match status" value="1"/>
</dbReference>
<dbReference type="Pfam" id="PF00763">
    <property type="entry name" value="THF_DHG_CYH"/>
    <property type="match status" value="1"/>
</dbReference>
<dbReference type="Pfam" id="PF02882">
    <property type="entry name" value="THF_DHG_CYH_C"/>
    <property type="match status" value="1"/>
</dbReference>
<dbReference type="PRINTS" id="PR00085">
    <property type="entry name" value="THFDHDRGNASE"/>
</dbReference>
<dbReference type="SUPFAM" id="SSF53223">
    <property type="entry name" value="Aminoacid dehydrogenase-like, N-terminal domain"/>
    <property type="match status" value="1"/>
</dbReference>
<dbReference type="SUPFAM" id="SSF51735">
    <property type="entry name" value="NAD(P)-binding Rossmann-fold domains"/>
    <property type="match status" value="1"/>
</dbReference>
<sequence length="293" mass="29738">MTTIPSSATSATKTLGGTELARGIRAEVTSAAAELTLLGVTPRLAVVVATDDESSAWYVRSIARAAAKSGLLCDIVDLGADATTQSIRAELQRLSADPAVHGIILQTPLPAGANFEDLAASIAPDKDVDGANPLSLGRLAAGLPAYAPATAAAVLALLDHHEVPLAGRTGVVVGRSNVVGKPAAQLLLQRDATVTVCHRYTQNLGHHTRTADVLVVAVGRPGLITAQHVAEHTVVIDVGTNPTDDGGLVGDVDETSVSGRVAGLTPVPGGVGPVTTALLLQHTIQSASRSEPS</sequence>
<comment type="function">
    <text evidence="1">Catalyzes the oxidation of 5,10-methylenetetrahydrofolate to 5,10-methenyltetrahydrofolate and then the hydrolysis of 5,10-methenyltetrahydrofolate to 10-formyltetrahydrofolate.</text>
</comment>
<comment type="catalytic activity">
    <reaction evidence="1">
        <text>(6R)-5,10-methylene-5,6,7,8-tetrahydrofolate + NADP(+) = (6R)-5,10-methenyltetrahydrofolate + NADPH</text>
        <dbReference type="Rhea" id="RHEA:22812"/>
        <dbReference type="ChEBI" id="CHEBI:15636"/>
        <dbReference type="ChEBI" id="CHEBI:57455"/>
        <dbReference type="ChEBI" id="CHEBI:57783"/>
        <dbReference type="ChEBI" id="CHEBI:58349"/>
        <dbReference type="EC" id="1.5.1.5"/>
    </reaction>
</comment>
<comment type="catalytic activity">
    <reaction evidence="1">
        <text>(6R)-5,10-methenyltetrahydrofolate + H2O = (6R)-10-formyltetrahydrofolate + H(+)</text>
        <dbReference type="Rhea" id="RHEA:23700"/>
        <dbReference type="ChEBI" id="CHEBI:15377"/>
        <dbReference type="ChEBI" id="CHEBI:15378"/>
        <dbReference type="ChEBI" id="CHEBI:57455"/>
        <dbReference type="ChEBI" id="CHEBI:195366"/>
        <dbReference type="EC" id="3.5.4.9"/>
    </reaction>
</comment>
<comment type="pathway">
    <text evidence="1">One-carbon metabolism; tetrahydrofolate interconversion.</text>
</comment>
<comment type="subunit">
    <text evidence="1">Homodimer.</text>
</comment>
<comment type="similarity">
    <text evidence="1">Belongs to the tetrahydrofolate dehydrogenase/cyclohydrolase family.</text>
</comment>